<dbReference type="EMBL" id="CU329670">
    <property type="protein sequence ID" value="CAC00557.1"/>
    <property type="molecule type" value="Genomic_DNA"/>
</dbReference>
<dbReference type="RefSeq" id="NP_594772.1">
    <property type="nucleotide sequence ID" value="NM_001020199.2"/>
</dbReference>
<dbReference type="PDB" id="2W9J">
    <property type="method" value="X-ray"/>
    <property type="resolution" value="2.60 A"/>
    <property type="chains" value="A/B=1-91"/>
</dbReference>
<dbReference type="PDBsum" id="2W9J"/>
<dbReference type="SMR" id="Q9P372"/>
<dbReference type="BioGRID" id="279021">
    <property type="interactions" value="1"/>
</dbReference>
<dbReference type="FunCoup" id="Q9P372">
    <property type="interactions" value="135"/>
</dbReference>
<dbReference type="STRING" id="284812.Q9P372"/>
<dbReference type="iPTMnet" id="Q9P372"/>
<dbReference type="PaxDb" id="4896-SPAC19B12.09.1"/>
<dbReference type="EnsemblFungi" id="SPAC19B12.09.1">
    <property type="protein sequence ID" value="SPAC19B12.09.1:pep"/>
    <property type="gene ID" value="SPAC19B12.09"/>
</dbReference>
<dbReference type="GeneID" id="2542565"/>
<dbReference type="KEGG" id="spo:2542565"/>
<dbReference type="PomBase" id="SPAC19B12.09">
    <property type="gene designation" value="srp14"/>
</dbReference>
<dbReference type="VEuPathDB" id="FungiDB:SPAC19B12.09"/>
<dbReference type="eggNOG" id="KOG1761">
    <property type="taxonomic scope" value="Eukaryota"/>
</dbReference>
<dbReference type="HOGENOM" id="CLU_094309_1_0_1"/>
<dbReference type="InParanoid" id="Q9P372"/>
<dbReference type="OMA" id="NAPNPKT"/>
<dbReference type="PhylomeDB" id="Q9P372"/>
<dbReference type="BRENDA" id="3.6.5.4">
    <property type="organism ID" value="5613"/>
</dbReference>
<dbReference type="Reactome" id="R-SPO-1799339">
    <property type="pathway name" value="SRP-dependent cotranslational protein targeting to membrane"/>
</dbReference>
<dbReference type="Reactome" id="R-SPO-6798695">
    <property type="pathway name" value="Neutrophil degranulation"/>
</dbReference>
<dbReference type="EvolutionaryTrace" id="Q9P372"/>
<dbReference type="PRO" id="PR:Q9P372"/>
<dbReference type="Proteomes" id="UP000002485">
    <property type="component" value="Chromosome I"/>
</dbReference>
<dbReference type="GO" id="GO:0005730">
    <property type="term" value="C:nucleolus"/>
    <property type="evidence" value="ECO:0007005"/>
    <property type="project" value="PomBase"/>
</dbReference>
<dbReference type="GO" id="GO:0005634">
    <property type="term" value="C:nucleus"/>
    <property type="evidence" value="ECO:0007005"/>
    <property type="project" value="PomBase"/>
</dbReference>
<dbReference type="GO" id="GO:0005786">
    <property type="term" value="C:signal recognition particle, endoplasmic reticulum targeting"/>
    <property type="evidence" value="ECO:0000318"/>
    <property type="project" value="GO_Central"/>
</dbReference>
<dbReference type="GO" id="GO:0008312">
    <property type="term" value="F:7S RNA binding"/>
    <property type="evidence" value="ECO:0007669"/>
    <property type="project" value="InterPro"/>
</dbReference>
<dbReference type="GO" id="GO:0030942">
    <property type="term" value="F:endoplasmic reticulum signal peptide binding"/>
    <property type="evidence" value="ECO:0000305"/>
    <property type="project" value="PomBase"/>
</dbReference>
<dbReference type="GO" id="GO:0006886">
    <property type="term" value="P:intracellular protein transport"/>
    <property type="evidence" value="ECO:0000303"/>
    <property type="project" value="PomBase"/>
</dbReference>
<dbReference type="GO" id="GO:0045047">
    <property type="term" value="P:protein targeting to ER"/>
    <property type="evidence" value="ECO:0000318"/>
    <property type="project" value="GO_Central"/>
</dbReference>
<dbReference type="GO" id="GO:0006617">
    <property type="term" value="P:SRP-dependent cotranslational protein targeting to membrane, signal sequence recognition"/>
    <property type="evidence" value="ECO:0000266"/>
    <property type="project" value="PomBase"/>
</dbReference>
<dbReference type="Gene3D" id="3.30.720.10">
    <property type="entry name" value="Signal recognition particle alu RNA binding heterodimer, srp9/1"/>
    <property type="match status" value="1"/>
</dbReference>
<dbReference type="InterPro" id="IPR003210">
    <property type="entry name" value="Signal_recog_particle_SRP14"/>
</dbReference>
<dbReference type="InterPro" id="IPR009018">
    <property type="entry name" value="Signal_recog_particle_SRP9/14"/>
</dbReference>
<dbReference type="PANTHER" id="PTHR12013">
    <property type="entry name" value="SIGNAL RECOGNITION PARTICLE 14 KD PROTEIN"/>
    <property type="match status" value="1"/>
</dbReference>
<dbReference type="Pfam" id="PF02290">
    <property type="entry name" value="SRP14"/>
    <property type="match status" value="1"/>
</dbReference>
<dbReference type="SUPFAM" id="SSF54762">
    <property type="entry name" value="Signal recognition particle alu RNA binding heterodimer, SRP9/14"/>
    <property type="match status" value="1"/>
</dbReference>
<feature type="chain" id="PRO_0000135195" description="Signal recognition particle subunit srp14">
    <location>
        <begin position="1"/>
        <end position="106"/>
    </location>
</feature>
<feature type="region of interest" description="Disordered" evidence="3">
    <location>
        <begin position="86"/>
        <end position="106"/>
    </location>
</feature>
<feature type="compositionally biased region" description="Basic residues" evidence="3">
    <location>
        <begin position="86"/>
        <end position="100"/>
    </location>
</feature>
<feature type="helix" evidence="5">
    <location>
        <begin position="5"/>
        <end position="17"/>
    </location>
</feature>
<feature type="strand" evidence="5">
    <location>
        <begin position="30"/>
        <end position="36"/>
    </location>
</feature>
<feature type="strand" evidence="5">
    <location>
        <begin position="45"/>
        <end position="51"/>
    </location>
</feature>
<feature type="strand" evidence="5">
    <location>
        <begin position="57"/>
        <end position="63"/>
    </location>
</feature>
<feature type="helix" evidence="5">
    <location>
        <begin position="64"/>
        <end position="66"/>
    </location>
</feature>
<feature type="helix" evidence="5">
    <location>
        <begin position="67"/>
        <end position="82"/>
    </location>
</feature>
<keyword id="KW-0002">3D-structure</keyword>
<keyword id="KW-0963">Cytoplasm</keyword>
<keyword id="KW-1185">Reference proteome</keyword>
<keyword id="KW-0687">Ribonucleoprotein</keyword>
<keyword id="KW-0694">RNA-binding</keyword>
<keyword id="KW-0733">Signal recognition particle</keyword>
<evidence type="ECO:0000250" key="1"/>
<evidence type="ECO:0000250" key="2">
    <source>
        <dbReference type="UniProtKB" id="P38985"/>
    </source>
</evidence>
<evidence type="ECO:0000256" key="3">
    <source>
        <dbReference type="SAM" id="MobiDB-lite"/>
    </source>
</evidence>
<evidence type="ECO:0000305" key="4"/>
<evidence type="ECO:0007829" key="5">
    <source>
        <dbReference type="PDB" id="2W9J"/>
    </source>
</evidence>
<organism>
    <name type="scientific">Schizosaccharomyces pombe (strain 972 / ATCC 24843)</name>
    <name type="common">Fission yeast</name>
    <dbReference type="NCBI Taxonomy" id="284812"/>
    <lineage>
        <taxon>Eukaryota</taxon>
        <taxon>Fungi</taxon>
        <taxon>Dikarya</taxon>
        <taxon>Ascomycota</taxon>
        <taxon>Taphrinomycotina</taxon>
        <taxon>Schizosaccharomycetes</taxon>
        <taxon>Schizosaccharomycetales</taxon>
        <taxon>Schizosaccharomycetaceae</taxon>
        <taxon>Schizosaccharomyces</taxon>
    </lineage>
</organism>
<proteinExistence type="evidence at protein level"/>
<name>SRP14_SCHPO</name>
<gene>
    <name type="primary">srp14</name>
    <name type="ORF">SPAC19B12.09</name>
</gene>
<protein>
    <recommendedName>
        <fullName>Signal recognition particle subunit srp14</fullName>
    </recommendedName>
    <alternativeName>
        <fullName>Signal recognition particle 14 kDa protein homolog</fullName>
    </alternativeName>
</protein>
<reference key="1">
    <citation type="journal article" date="2002" name="Nature">
        <title>The genome sequence of Schizosaccharomyces pombe.</title>
        <authorList>
            <person name="Wood V."/>
            <person name="Gwilliam R."/>
            <person name="Rajandream M.A."/>
            <person name="Lyne M.H."/>
            <person name="Lyne R."/>
            <person name="Stewart A."/>
            <person name="Sgouros J.G."/>
            <person name="Peat N."/>
            <person name="Hayles J."/>
            <person name="Baker S.G."/>
            <person name="Basham D."/>
            <person name="Bowman S."/>
            <person name="Brooks K."/>
            <person name="Brown D."/>
            <person name="Brown S."/>
            <person name="Chillingworth T."/>
            <person name="Churcher C.M."/>
            <person name="Collins M."/>
            <person name="Connor R."/>
            <person name="Cronin A."/>
            <person name="Davis P."/>
            <person name="Feltwell T."/>
            <person name="Fraser A."/>
            <person name="Gentles S."/>
            <person name="Goble A."/>
            <person name="Hamlin N."/>
            <person name="Harris D.E."/>
            <person name="Hidalgo J."/>
            <person name="Hodgson G."/>
            <person name="Holroyd S."/>
            <person name="Hornsby T."/>
            <person name="Howarth S."/>
            <person name="Huckle E.J."/>
            <person name="Hunt S."/>
            <person name="Jagels K."/>
            <person name="James K.D."/>
            <person name="Jones L."/>
            <person name="Jones M."/>
            <person name="Leather S."/>
            <person name="McDonald S."/>
            <person name="McLean J."/>
            <person name="Mooney P."/>
            <person name="Moule S."/>
            <person name="Mungall K.L."/>
            <person name="Murphy L.D."/>
            <person name="Niblett D."/>
            <person name="Odell C."/>
            <person name="Oliver K."/>
            <person name="O'Neil S."/>
            <person name="Pearson D."/>
            <person name="Quail M.A."/>
            <person name="Rabbinowitsch E."/>
            <person name="Rutherford K.M."/>
            <person name="Rutter S."/>
            <person name="Saunders D."/>
            <person name="Seeger K."/>
            <person name="Sharp S."/>
            <person name="Skelton J."/>
            <person name="Simmonds M.N."/>
            <person name="Squares R."/>
            <person name="Squares S."/>
            <person name="Stevens K."/>
            <person name="Taylor K."/>
            <person name="Taylor R.G."/>
            <person name="Tivey A."/>
            <person name="Walsh S.V."/>
            <person name="Warren T."/>
            <person name="Whitehead S."/>
            <person name="Woodward J.R."/>
            <person name="Volckaert G."/>
            <person name="Aert R."/>
            <person name="Robben J."/>
            <person name="Grymonprez B."/>
            <person name="Weltjens I."/>
            <person name="Vanstreels E."/>
            <person name="Rieger M."/>
            <person name="Schaefer M."/>
            <person name="Mueller-Auer S."/>
            <person name="Gabel C."/>
            <person name="Fuchs M."/>
            <person name="Duesterhoeft A."/>
            <person name="Fritzc C."/>
            <person name="Holzer E."/>
            <person name="Moestl D."/>
            <person name="Hilbert H."/>
            <person name="Borzym K."/>
            <person name="Langer I."/>
            <person name="Beck A."/>
            <person name="Lehrach H."/>
            <person name="Reinhardt R."/>
            <person name="Pohl T.M."/>
            <person name="Eger P."/>
            <person name="Zimmermann W."/>
            <person name="Wedler H."/>
            <person name="Wambutt R."/>
            <person name="Purnelle B."/>
            <person name="Goffeau A."/>
            <person name="Cadieu E."/>
            <person name="Dreano S."/>
            <person name="Gloux S."/>
            <person name="Lelaure V."/>
            <person name="Mottier S."/>
            <person name="Galibert F."/>
            <person name="Aves S.J."/>
            <person name="Xiang Z."/>
            <person name="Hunt C."/>
            <person name="Moore K."/>
            <person name="Hurst S.M."/>
            <person name="Lucas M."/>
            <person name="Rochet M."/>
            <person name="Gaillardin C."/>
            <person name="Tallada V.A."/>
            <person name="Garzon A."/>
            <person name="Thode G."/>
            <person name="Daga R.R."/>
            <person name="Cruzado L."/>
            <person name="Jimenez J."/>
            <person name="Sanchez M."/>
            <person name="del Rey F."/>
            <person name="Benito J."/>
            <person name="Dominguez A."/>
            <person name="Revuelta J.L."/>
            <person name="Moreno S."/>
            <person name="Armstrong J."/>
            <person name="Forsburg S.L."/>
            <person name="Cerutti L."/>
            <person name="Lowe T."/>
            <person name="McCombie W.R."/>
            <person name="Paulsen I."/>
            <person name="Potashkin J."/>
            <person name="Shpakovski G.V."/>
            <person name="Ussery D."/>
            <person name="Barrell B.G."/>
            <person name="Nurse P."/>
        </authorList>
    </citation>
    <scope>NUCLEOTIDE SEQUENCE [LARGE SCALE GENOMIC DNA]</scope>
    <source>
        <strain>972 / ATCC 24843</strain>
    </source>
</reference>
<comment type="function">
    <text evidence="2">Component of the signal recognition particle (SRP) complex, a ribonucleoprotein complex that mediates the cotranslational targeting of secretory and membrane proteins to the endoplasmic reticulum (ER).</text>
</comment>
<comment type="subunit">
    <text evidence="2">Component of a fungal signal recognition particle (SRP) complex that consists of a 7SL RNA molecule (scR1) and at least six protein subunits: srp72, srp68, srp54, sec65, srp21 and srp14.</text>
</comment>
<comment type="subcellular location">
    <subcellularLocation>
        <location evidence="1">Cytoplasm</location>
    </subcellularLocation>
</comment>
<comment type="similarity">
    <text evidence="4">Belongs to the SRP14 family.</text>
</comment>
<accession>Q9P372</accession>
<sequence length="106" mass="11718">MLLSNEEFLKKLTDLLQTHQSKGTGSVYLSQKCNPVDEGEGSSASVLIRAKSGAAEKISTVVELDYFTDFFQSYAEVCKGQIVGLKKRDRKKTKKNKKKTTSSGHT</sequence>